<comment type="function">
    <text evidence="2 3 4">mRNA-binding protein which stimulates mRNA decapping by DCP1 and DCP2. Involved in the regulation of expression of multiple genes involved in glycolysis and gluconeogenesis.</text>
</comment>
<comment type="subcellular location">
    <subcellularLocation>
        <location evidence="5">Cytoplasm</location>
    </subcellularLocation>
</comment>
<comment type="similarity">
    <text evidence="6">Belongs to the EDC family.</text>
</comment>
<proteinExistence type="evidence at protein level"/>
<gene>
    <name type="primary">EDC1</name>
    <name type="ordered locus">YGL222C</name>
</gene>
<sequence>MSTDTMYFNSSRLLPSAGRNKTNNLIKQKTRNNRARGNAAKNANNNNYITDIPPPQTLPNGQKPNFGHSSNKKPSFNQKKHSPPSSPSSTTTLGKKNRQNNKETPRQNNKDDTRLLSQNLKNLLLNQKQSPHGSQGIIPMGCNGSAKKLSHSYAGSTFATNGPREAKNLPKPSFL</sequence>
<dbReference type="EMBL" id="Z72744">
    <property type="protein sequence ID" value="CAA96938.1"/>
    <property type="molecule type" value="Genomic_DNA"/>
</dbReference>
<dbReference type="EMBL" id="AY692752">
    <property type="protein sequence ID" value="AAT92771.1"/>
    <property type="molecule type" value="Genomic_DNA"/>
</dbReference>
<dbReference type="EMBL" id="BK006941">
    <property type="protein sequence ID" value="DAA07897.1"/>
    <property type="molecule type" value="Genomic_DNA"/>
</dbReference>
<dbReference type="PIR" id="S64244">
    <property type="entry name" value="S64244"/>
</dbReference>
<dbReference type="RefSeq" id="NP_011293.1">
    <property type="nucleotide sequence ID" value="NM_001181087.1"/>
</dbReference>
<dbReference type="BioGRID" id="33037">
    <property type="interactions" value="259"/>
</dbReference>
<dbReference type="DIP" id="DIP-5109N"/>
<dbReference type="FunCoup" id="P53080">
    <property type="interactions" value="36"/>
</dbReference>
<dbReference type="IntAct" id="P53080">
    <property type="interactions" value="12"/>
</dbReference>
<dbReference type="STRING" id="4932.YGL222C"/>
<dbReference type="iPTMnet" id="P53080"/>
<dbReference type="PaxDb" id="4932-YGL222C"/>
<dbReference type="PeptideAtlas" id="P53080"/>
<dbReference type="EnsemblFungi" id="YGL222C_mRNA">
    <property type="protein sequence ID" value="YGL222C"/>
    <property type="gene ID" value="YGL222C"/>
</dbReference>
<dbReference type="GeneID" id="852650"/>
<dbReference type="KEGG" id="sce:YGL222C"/>
<dbReference type="AGR" id="SGD:S000003190"/>
<dbReference type="SGD" id="S000003190">
    <property type="gene designation" value="EDC1"/>
</dbReference>
<dbReference type="VEuPathDB" id="FungiDB:YGL222C"/>
<dbReference type="HOGENOM" id="CLU_131105_0_0_1"/>
<dbReference type="InParanoid" id="P53080"/>
<dbReference type="OMA" id="PRQNNKD"/>
<dbReference type="OrthoDB" id="4069652at2759"/>
<dbReference type="BioCyc" id="YEAST:G3O-30696-MONOMER"/>
<dbReference type="BioGRID-ORCS" id="852650">
    <property type="hits" value="5 hits in 10 CRISPR screens"/>
</dbReference>
<dbReference type="CD-CODE" id="A777E0F8">
    <property type="entry name" value="P-body"/>
</dbReference>
<dbReference type="PRO" id="PR:P53080"/>
<dbReference type="Proteomes" id="UP000002311">
    <property type="component" value="Chromosome VII"/>
</dbReference>
<dbReference type="RNAct" id="P53080">
    <property type="molecule type" value="protein"/>
</dbReference>
<dbReference type="GO" id="GO:0005737">
    <property type="term" value="C:cytoplasm"/>
    <property type="evidence" value="ECO:0000314"/>
    <property type="project" value="SGD"/>
</dbReference>
<dbReference type="GO" id="GO:0005634">
    <property type="term" value="C:nucleus"/>
    <property type="evidence" value="ECO:0000314"/>
    <property type="project" value="SGD"/>
</dbReference>
<dbReference type="GO" id="GO:0098745">
    <property type="term" value="C:RNA decapping complex"/>
    <property type="evidence" value="ECO:0000314"/>
    <property type="project" value="SGD"/>
</dbReference>
<dbReference type="GO" id="GO:0003729">
    <property type="term" value="F:mRNA binding"/>
    <property type="evidence" value="ECO:0000314"/>
    <property type="project" value="SGD"/>
</dbReference>
<dbReference type="GO" id="GO:0000290">
    <property type="term" value="P:deadenylation-dependent decapping of nuclear-transcribed mRNA"/>
    <property type="evidence" value="ECO:0000314"/>
    <property type="project" value="SGD"/>
</dbReference>
<dbReference type="GO" id="GO:0006397">
    <property type="term" value="P:mRNA processing"/>
    <property type="evidence" value="ECO:0007669"/>
    <property type="project" value="UniProtKB-KW"/>
</dbReference>
<dbReference type="GO" id="GO:0000184">
    <property type="term" value="P:nuclear-transcribed mRNA catabolic process, nonsense-mediated decay"/>
    <property type="evidence" value="ECO:0007669"/>
    <property type="project" value="UniProtKB-KW"/>
</dbReference>
<dbReference type="GO" id="GO:0032056">
    <property type="term" value="P:positive regulation of translation in response to stress"/>
    <property type="evidence" value="ECO:0000315"/>
    <property type="project" value="SGD"/>
</dbReference>
<dbReference type="InterPro" id="IPR028322">
    <property type="entry name" value="PNRC-like_rgn"/>
</dbReference>
<dbReference type="Pfam" id="PF15365">
    <property type="entry name" value="PNRC"/>
    <property type="match status" value="1"/>
</dbReference>
<keyword id="KW-0007">Acetylation</keyword>
<keyword id="KW-0963">Cytoplasm</keyword>
<keyword id="KW-0507">mRNA processing</keyword>
<keyword id="KW-0866">Nonsense-mediated mRNA decay</keyword>
<keyword id="KW-0597">Phosphoprotein</keyword>
<keyword id="KW-1185">Reference proteome</keyword>
<keyword id="KW-0694">RNA-binding</keyword>
<protein>
    <recommendedName>
        <fullName>Enhancer of mRNA-decapping protein 1</fullName>
    </recommendedName>
</protein>
<feature type="initiator methionine" description="Removed" evidence="8">
    <location>
        <position position="1"/>
    </location>
</feature>
<feature type="chain" id="PRO_0000202715" description="Enhancer of mRNA-decapping protein 1">
    <location>
        <begin position="2"/>
        <end position="175"/>
    </location>
</feature>
<feature type="region of interest" description="Disordered" evidence="1">
    <location>
        <begin position="1"/>
        <end position="113"/>
    </location>
</feature>
<feature type="region of interest" description="Disordered" evidence="1">
    <location>
        <begin position="155"/>
        <end position="175"/>
    </location>
</feature>
<feature type="compositionally biased region" description="Polar residues" evidence="1">
    <location>
        <begin position="1"/>
        <end position="27"/>
    </location>
</feature>
<feature type="compositionally biased region" description="Low complexity" evidence="1">
    <location>
        <begin position="35"/>
        <end position="47"/>
    </location>
</feature>
<feature type="compositionally biased region" description="Polar residues" evidence="1">
    <location>
        <begin position="58"/>
        <end position="77"/>
    </location>
</feature>
<feature type="compositionally biased region" description="Basic and acidic residues" evidence="1">
    <location>
        <begin position="100"/>
        <end position="113"/>
    </location>
</feature>
<feature type="modified residue" description="N-acetylserine" evidence="8">
    <location>
        <position position="2"/>
    </location>
</feature>
<feature type="modified residue" description="Phosphoserine" evidence="7">
    <location>
        <position position="82"/>
    </location>
</feature>
<accession>P53080</accession>
<accession>D6VVB3</accession>
<organism>
    <name type="scientific">Saccharomyces cerevisiae (strain ATCC 204508 / S288c)</name>
    <name type="common">Baker's yeast</name>
    <dbReference type="NCBI Taxonomy" id="559292"/>
    <lineage>
        <taxon>Eukaryota</taxon>
        <taxon>Fungi</taxon>
        <taxon>Dikarya</taxon>
        <taxon>Ascomycota</taxon>
        <taxon>Saccharomycotina</taxon>
        <taxon>Saccharomycetes</taxon>
        <taxon>Saccharomycetales</taxon>
        <taxon>Saccharomycetaceae</taxon>
        <taxon>Saccharomyces</taxon>
    </lineage>
</organism>
<evidence type="ECO:0000256" key="1">
    <source>
        <dbReference type="SAM" id="MobiDB-lite"/>
    </source>
</evidence>
<evidence type="ECO:0000269" key="2">
    <source>
    </source>
</evidence>
<evidence type="ECO:0000269" key="3">
    <source>
    </source>
</evidence>
<evidence type="ECO:0000269" key="4">
    <source>
    </source>
</evidence>
<evidence type="ECO:0000269" key="5">
    <source>
    </source>
</evidence>
<evidence type="ECO:0000305" key="6"/>
<evidence type="ECO:0007744" key="7">
    <source>
    </source>
</evidence>
<evidence type="ECO:0007744" key="8">
    <source>
    </source>
</evidence>
<reference key="1">
    <citation type="journal article" date="1997" name="Yeast">
        <title>Sequence analysis of 203 kilobases from Saccharomyces cerevisiae chromosome VII.</title>
        <authorList>
            <person name="Rieger M."/>
            <person name="Brueckner M."/>
            <person name="Schaefer M."/>
            <person name="Mueller-Auer S."/>
        </authorList>
    </citation>
    <scope>NUCLEOTIDE SEQUENCE [GENOMIC DNA]</scope>
    <source>
        <strain>ATCC 204508 / S288c</strain>
    </source>
</reference>
<reference key="2">
    <citation type="journal article" date="1997" name="Nature">
        <title>The nucleotide sequence of Saccharomyces cerevisiae chromosome VII.</title>
        <authorList>
            <person name="Tettelin H."/>
            <person name="Agostoni-Carbone M.L."/>
            <person name="Albermann K."/>
            <person name="Albers M."/>
            <person name="Arroyo J."/>
            <person name="Backes U."/>
            <person name="Barreiros T."/>
            <person name="Bertani I."/>
            <person name="Bjourson A.J."/>
            <person name="Brueckner M."/>
            <person name="Bruschi C.V."/>
            <person name="Carignani G."/>
            <person name="Castagnoli L."/>
            <person name="Cerdan E."/>
            <person name="Clemente M.L."/>
            <person name="Coblenz A."/>
            <person name="Coglievina M."/>
            <person name="Coissac E."/>
            <person name="Defoor E."/>
            <person name="Del Bino S."/>
            <person name="Delius H."/>
            <person name="Delneri D."/>
            <person name="de Wergifosse P."/>
            <person name="Dujon B."/>
            <person name="Durand P."/>
            <person name="Entian K.-D."/>
            <person name="Eraso P."/>
            <person name="Escribano V."/>
            <person name="Fabiani L."/>
            <person name="Fartmann B."/>
            <person name="Feroli F."/>
            <person name="Feuermann M."/>
            <person name="Frontali L."/>
            <person name="Garcia-Gonzalez M."/>
            <person name="Garcia-Saez M.I."/>
            <person name="Goffeau A."/>
            <person name="Guerreiro P."/>
            <person name="Hani J."/>
            <person name="Hansen M."/>
            <person name="Hebling U."/>
            <person name="Hernandez K."/>
            <person name="Heumann K."/>
            <person name="Hilger F."/>
            <person name="Hofmann B."/>
            <person name="Indge K.J."/>
            <person name="James C.M."/>
            <person name="Klima R."/>
            <person name="Koetter P."/>
            <person name="Kramer B."/>
            <person name="Kramer W."/>
            <person name="Lauquin G."/>
            <person name="Leuther H."/>
            <person name="Louis E.J."/>
            <person name="Maillier E."/>
            <person name="Marconi A."/>
            <person name="Martegani E."/>
            <person name="Mazon M.J."/>
            <person name="Mazzoni C."/>
            <person name="McReynolds A.D.K."/>
            <person name="Melchioretto P."/>
            <person name="Mewes H.-W."/>
            <person name="Minenkova O."/>
            <person name="Mueller-Auer S."/>
            <person name="Nawrocki A."/>
            <person name="Netter P."/>
            <person name="Neu R."/>
            <person name="Nombela C."/>
            <person name="Oliver S.G."/>
            <person name="Panzeri L."/>
            <person name="Paoluzi S."/>
            <person name="Plevani P."/>
            <person name="Portetelle D."/>
            <person name="Portillo F."/>
            <person name="Potier S."/>
            <person name="Purnelle B."/>
            <person name="Rieger M."/>
            <person name="Riles L."/>
            <person name="Rinaldi T."/>
            <person name="Robben J."/>
            <person name="Rodrigues-Pousada C."/>
            <person name="Rodriguez-Belmonte E."/>
            <person name="Rodriguez-Torres A.M."/>
            <person name="Rose M."/>
            <person name="Ruzzi M."/>
            <person name="Saliola M."/>
            <person name="Sanchez-Perez M."/>
            <person name="Schaefer B."/>
            <person name="Schaefer M."/>
            <person name="Scharfe M."/>
            <person name="Schmidheini T."/>
            <person name="Schreer A."/>
            <person name="Skala J."/>
            <person name="Souciet J.-L."/>
            <person name="Steensma H.Y."/>
            <person name="Talla E."/>
            <person name="Thierry A."/>
            <person name="Vandenbol M."/>
            <person name="van der Aart Q.J.M."/>
            <person name="Van Dyck L."/>
            <person name="Vanoni M."/>
            <person name="Verhasselt P."/>
            <person name="Voet M."/>
            <person name="Volckaert G."/>
            <person name="Wambutt R."/>
            <person name="Watson M.D."/>
            <person name="Weber N."/>
            <person name="Wedler E."/>
            <person name="Wedler H."/>
            <person name="Wipfli P."/>
            <person name="Wolf K."/>
            <person name="Wright L.F."/>
            <person name="Zaccaria P."/>
            <person name="Zimmermann M."/>
            <person name="Zollner A."/>
            <person name="Kleine K."/>
        </authorList>
    </citation>
    <scope>NUCLEOTIDE SEQUENCE [LARGE SCALE GENOMIC DNA]</scope>
    <source>
        <strain>ATCC 204508 / S288c</strain>
    </source>
</reference>
<reference key="3">
    <citation type="journal article" date="2014" name="G3 (Bethesda)">
        <title>The reference genome sequence of Saccharomyces cerevisiae: Then and now.</title>
        <authorList>
            <person name="Engel S.R."/>
            <person name="Dietrich F.S."/>
            <person name="Fisk D.G."/>
            <person name="Binkley G."/>
            <person name="Balakrishnan R."/>
            <person name="Costanzo M.C."/>
            <person name="Dwight S.S."/>
            <person name="Hitz B.C."/>
            <person name="Karra K."/>
            <person name="Nash R.S."/>
            <person name="Weng S."/>
            <person name="Wong E.D."/>
            <person name="Lloyd P."/>
            <person name="Skrzypek M.S."/>
            <person name="Miyasato S.R."/>
            <person name="Simison M."/>
            <person name="Cherry J.M."/>
        </authorList>
    </citation>
    <scope>GENOME REANNOTATION</scope>
    <source>
        <strain>ATCC 204508 / S288c</strain>
    </source>
</reference>
<reference key="4">
    <citation type="journal article" date="2007" name="Genome Res.">
        <title>Approaching a complete repository of sequence-verified protein-encoding clones for Saccharomyces cerevisiae.</title>
        <authorList>
            <person name="Hu Y."/>
            <person name="Rolfs A."/>
            <person name="Bhullar B."/>
            <person name="Murthy T.V.S."/>
            <person name="Zhu C."/>
            <person name="Berger M.F."/>
            <person name="Camargo A.A."/>
            <person name="Kelley F."/>
            <person name="McCarron S."/>
            <person name="Jepson D."/>
            <person name="Richardson A."/>
            <person name="Raphael J."/>
            <person name="Moreira D."/>
            <person name="Taycher E."/>
            <person name="Zuo D."/>
            <person name="Mohr S."/>
            <person name="Kane M.F."/>
            <person name="Williamson J."/>
            <person name="Simpson A.J.G."/>
            <person name="Bulyk M.L."/>
            <person name="Harlow E."/>
            <person name="Marsischky G."/>
            <person name="Kolodner R.D."/>
            <person name="LaBaer J."/>
        </authorList>
    </citation>
    <scope>NUCLEOTIDE SEQUENCE [GENOMIC DNA]</scope>
    <source>
        <strain>ATCC 204508 / S288c</strain>
    </source>
</reference>
<reference key="5">
    <citation type="journal article" date="2001" name="Genetics">
        <title>Two related proteins, Edc1p and Edc2p, stimulate mRNA decapping in Saccharomyces cerevisiae.</title>
        <authorList>
            <person name="Dunckley T."/>
            <person name="Tucker M."/>
            <person name="Parker R."/>
        </authorList>
    </citation>
    <scope>FUNCTION</scope>
</reference>
<reference key="6">
    <citation type="journal article" date="2003" name="Nature">
        <title>Global analysis of protein localization in budding yeast.</title>
        <authorList>
            <person name="Huh W.-K."/>
            <person name="Falvo J.V."/>
            <person name="Gerke L.C."/>
            <person name="Carroll A.S."/>
            <person name="Howson R.W."/>
            <person name="Weissman J.S."/>
            <person name="O'Shea E.K."/>
        </authorList>
    </citation>
    <scope>SUBCELLULAR LOCATION [LARGE SCALE ANALYSIS]</scope>
</reference>
<reference key="7">
    <citation type="journal article" date="2003" name="RNA">
        <title>Analysis of recombinant yeast decapping enzyme.</title>
        <authorList>
            <person name="Steiger M."/>
            <person name="Carr-Schmid A."/>
            <person name="Schwartz D.C."/>
            <person name="Kiledjian M."/>
            <person name="Parker R."/>
        </authorList>
    </citation>
    <scope>FUNCTION</scope>
</reference>
<reference key="8">
    <citation type="journal article" date="2003" name="RNA">
        <title>The enhancer of decapping proteins, Edc1p and Edc2p, bind RNA and stimulate the activity of the decapping enzyme.</title>
        <authorList>
            <person name="Schwartz D."/>
            <person name="Decker C.J."/>
            <person name="Parker R."/>
        </authorList>
    </citation>
    <scope>FUNCTION</scope>
</reference>
<reference key="9">
    <citation type="journal article" date="2007" name="Proc. Natl. Acad. Sci. U.S.A.">
        <title>Analysis of phosphorylation sites on proteins from Saccharomyces cerevisiae by electron transfer dissociation (ETD) mass spectrometry.</title>
        <authorList>
            <person name="Chi A."/>
            <person name="Huttenhower C."/>
            <person name="Geer L.Y."/>
            <person name="Coon J.J."/>
            <person name="Syka J.E.P."/>
            <person name="Bai D.L."/>
            <person name="Shabanowitz J."/>
            <person name="Burke D.J."/>
            <person name="Troyanskaya O.G."/>
            <person name="Hunt D.F."/>
        </authorList>
    </citation>
    <scope>IDENTIFICATION BY MASS SPECTROMETRY [LARGE SCALE ANALYSIS]</scope>
</reference>
<reference key="10">
    <citation type="journal article" date="2008" name="Mol. Cell. Proteomics">
        <title>A multidimensional chromatography technology for in-depth phosphoproteome analysis.</title>
        <authorList>
            <person name="Albuquerque C.P."/>
            <person name="Smolka M.B."/>
            <person name="Payne S.H."/>
            <person name="Bafna V."/>
            <person name="Eng J."/>
            <person name="Zhou H."/>
        </authorList>
    </citation>
    <scope>IDENTIFICATION BY MASS SPECTROMETRY [LARGE SCALE ANALYSIS]</scope>
</reference>
<reference key="11">
    <citation type="journal article" date="2009" name="Science">
        <title>Global analysis of Cdk1 substrate phosphorylation sites provides insights into evolution.</title>
        <authorList>
            <person name="Holt L.J."/>
            <person name="Tuch B.B."/>
            <person name="Villen J."/>
            <person name="Johnson A.D."/>
            <person name="Gygi S.P."/>
            <person name="Morgan D.O."/>
        </authorList>
    </citation>
    <scope>PHOSPHORYLATION [LARGE SCALE ANALYSIS] AT SER-82</scope>
    <scope>IDENTIFICATION BY MASS SPECTROMETRY [LARGE SCALE ANALYSIS]</scope>
</reference>
<reference key="12">
    <citation type="journal article" date="2012" name="Proc. Natl. Acad. Sci. U.S.A.">
        <title>N-terminal acetylome analyses and functional insights of the N-terminal acetyltransferase NatB.</title>
        <authorList>
            <person name="Van Damme P."/>
            <person name="Lasa M."/>
            <person name="Polevoda B."/>
            <person name="Gazquez C."/>
            <person name="Elosegui-Artola A."/>
            <person name="Kim D.S."/>
            <person name="De Juan-Pardo E."/>
            <person name="Demeyer K."/>
            <person name="Hole K."/>
            <person name="Larrea E."/>
            <person name="Timmerman E."/>
            <person name="Prieto J."/>
            <person name="Arnesen T."/>
            <person name="Sherman F."/>
            <person name="Gevaert K."/>
            <person name="Aldabe R."/>
        </authorList>
    </citation>
    <scope>ACETYLATION [LARGE SCALE ANALYSIS] AT SER-2</scope>
    <scope>CLEAVAGE OF INITIATOR METHIONINE [LARGE SCALE ANALYSIS]</scope>
    <scope>IDENTIFICATION BY MASS SPECTROMETRY [LARGE SCALE ANALYSIS]</scope>
</reference>
<name>EDC1_YEAST</name>